<organism>
    <name type="scientific">Chara vulgaris</name>
    <name type="common">Common stonewort</name>
    <dbReference type="NCBI Taxonomy" id="55564"/>
    <lineage>
        <taxon>Eukaryota</taxon>
        <taxon>Viridiplantae</taxon>
        <taxon>Streptophyta</taxon>
        <taxon>Charophyceae</taxon>
        <taxon>Charales</taxon>
        <taxon>Characeae</taxon>
        <taxon>Chara</taxon>
    </lineage>
</organism>
<name>NU6C_CHAVU</name>
<proteinExistence type="inferred from homology"/>
<accession>Q1ACE6</accession>
<geneLocation type="chloroplast"/>
<reference key="1">
    <citation type="journal article" date="2006" name="Mol. Biol. Evol.">
        <title>The chloroplast genome sequence of Chara vulgaris sheds new light into the closest green algal relatives of land plants.</title>
        <authorList>
            <person name="Turmel M."/>
            <person name="Otis C."/>
            <person name="Lemieux C."/>
        </authorList>
    </citation>
    <scope>NUCLEOTIDE SEQUENCE [LARGE SCALE GENOMIC DNA]</scope>
</reference>
<dbReference type="EC" id="7.1.1.-"/>
<dbReference type="EMBL" id="DQ229107">
    <property type="protein sequence ID" value="ABA61923.1"/>
    <property type="molecule type" value="Genomic_DNA"/>
</dbReference>
<dbReference type="RefSeq" id="YP_635801.1">
    <property type="nucleotide sequence ID" value="NC_008097.1"/>
</dbReference>
<dbReference type="SMR" id="Q1ACE6"/>
<dbReference type="GeneID" id="4100210"/>
<dbReference type="GO" id="GO:0009535">
    <property type="term" value="C:chloroplast thylakoid membrane"/>
    <property type="evidence" value="ECO:0007669"/>
    <property type="project" value="UniProtKB-SubCell"/>
</dbReference>
<dbReference type="GO" id="GO:0008137">
    <property type="term" value="F:NADH dehydrogenase (ubiquinone) activity"/>
    <property type="evidence" value="ECO:0007669"/>
    <property type="project" value="InterPro"/>
</dbReference>
<dbReference type="GO" id="GO:0048038">
    <property type="term" value="F:quinone binding"/>
    <property type="evidence" value="ECO:0007669"/>
    <property type="project" value="UniProtKB-KW"/>
</dbReference>
<dbReference type="Gene3D" id="1.20.120.1200">
    <property type="entry name" value="NADH-ubiquinone/plastoquinone oxidoreductase chain 6, subunit NuoJ"/>
    <property type="match status" value="1"/>
</dbReference>
<dbReference type="InterPro" id="IPR001457">
    <property type="entry name" value="NADH_UbQ/plastoQ_OxRdtase_su6"/>
</dbReference>
<dbReference type="InterPro" id="IPR042106">
    <property type="entry name" value="Nuo/plastoQ_OxRdtase_6_NuoJ"/>
</dbReference>
<dbReference type="PANTHER" id="PTHR33269">
    <property type="entry name" value="NADH-UBIQUINONE OXIDOREDUCTASE CHAIN 6"/>
    <property type="match status" value="1"/>
</dbReference>
<dbReference type="PANTHER" id="PTHR33269:SF17">
    <property type="entry name" value="NADH-UBIQUINONE OXIDOREDUCTASE CHAIN 6"/>
    <property type="match status" value="1"/>
</dbReference>
<dbReference type="Pfam" id="PF00499">
    <property type="entry name" value="Oxidored_q3"/>
    <property type="match status" value="1"/>
</dbReference>
<gene>
    <name type="primary">ndhG</name>
</gene>
<comment type="function">
    <text evidence="1">NDH shuttles electrons from NAD(P)H:plastoquinone, via FMN and iron-sulfur (Fe-S) centers, to quinones in the photosynthetic chain and possibly in a chloroplast respiratory chain. The immediate electron acceptor for the enzyme in this species is believed to be plastoquinone. Couples the redox reaction to proton translocation, and thus conserves the redox energy in a proton gradient (By similarity).</text>
</comment>
<comment type="catalytic activity">
    <reaction>
        <text>a plastoquinone + NADH + (n+1) H(+)(in) = a plastoquinol + NAD(+) + n H(+)(out)</text>
        <dbReference type="Rhea" id="RHEA:42608"/>
        <dbReference type="Rhea" id="RHEA-COMP:9561"/>
        <dbReference type="Rhea" id="RHEA-COMP:9562"/>
        <dbReference type="ChEBI" id="CHEBI:15378"/>
        <dbReference type="ChEBI" id="CHEBI:17757"/>
        <dbReference type="ChEBI" id="CHEBI:57540"/>
        <dbReference type="ChEBI" id="CHEBI:57945"/>
        <dbReference type="ChEBI" id="CHEBI:62192"/>
    </reaction>
</comment>
<comment type="catalytic activity">
    <reaction>
        <text>a plastoquinone + NADPH + (n+1) H(+)(in) = a plastoquinol + NADP(+) + n H(+)(out)</text>
        <dbReference type="Rhea" id="RHEA:42612"/>
        <dbReference type="Rhea" id="RHEA-COMP:9561"/>
        <dbReference type="Rhea" id="RHEA-COMP:9562"/>
        <dbReference type="ChEBI" id="CHEBI:15378"/>
        <dbReference type="ChEBI" id="CHEBI:17757"/>
        <dbReference type="ChEBI" id="CHEBI:57783"/>
        <dbReference type="ChEBI" id="CHEBI:58349"/>
        <dbReference type="ChEBI" id="CHEBI:62192"/>
    </reaction>
</comment>
<comment type="subunit">
    <text evidence="1">NDH is composed of at least 16 different subunits, 5 of which are encoded in the nucleus.</text>
</comment>
<comment type="subcellular location">
    <subcellularLocation>
        <location evidence="1">Plastid</location>
        <location evidence="1">Chloroplast thylakoid membrane</location>
        <topology evidence="1">Multi-pass membrane protein</topology>
    </subcellularLocation>
</comment>
<comment type="similarity">
    <text evidence="3">Belongs to the complex I subunit 6 family.</text>
</comment>
<evidence type="ECO:0000250" key="1"/>
<evidence type="ECO:0000255" key="2"/>
<evidence type="ECO:0000305" key="3"/>
<feature type="chain" id="PRO_0000360238" description="NAD(P)H-quinone oxidoreductase subunit 6, chloroplastic">
    <location>
        <begin position="1"/>
        <end position="178"/>
    </location>
</feature>
<feature type="transmembrane region" description="Helical" evidence="2">
    <location>
        <begin position="10"/>
        <end position="30"/>
    </location>
</feature>
<feature type="transmembrane region" description="Helical" evidence="2">
    <location>
        <begin position="33"/>
        <end position="53"/>
    </location>
</feature>
<feature type="transmembrane region" description="Helical" evidence="2">
    <location>
        <begin position="64"/>
        <end position="84"/>
    </location>
</feature>
<feature type="transmembrane region" description="Helical" evidence="2">
    <location>
        <begin position="100"/>
        <end position="120"/>
    </location>
</feature>
<feature type="transmembrane region" description="Helical" evidence="2">
    <location>
        <begin position="148"/>
        <end position="168"/>
    </location>
</feature>
<protein>
    <recommendedName>
        <fullName>NAD(P)H-quinone oxidoreductase subunit 6, chloroplastic</fullName>
        <ecNumber>7.1.1.-</ecNumber>
    </recommendedName>
    <alternativeName>
        <fullName>NAD(P)H dehydrogenase subunit 6</fullName>
    </alternativeName>
    <alternativeName>
        <fullName>NADH-plastoquinone oxidoreductase subunit 6</fullName>
    </alternativeName>
</protein>
<keyword id="KW-0150">Chloroplast</keyword>
<keyword id="KW-0472">Membrane</keyword>
<keyword id="KW-0520">NAD</keyword>
<keyword id="KW-0521">NADP</keyword>
<keyword id="KW-0934">Plastid</keyword>
<keyword id="KW-0618">Plastoquinone</keyword>
<keyword id="KW-0874">Quinone</keyword>
<keyword id="KW-0793">Thylakoid</keyword>
<keyword id="KW-1278">Translocase</keyword>
<keyword id="KW-0812">Transmembrane</keyword>
<keyword id="KW-1133">Transmembrane helix</keyword>
<keyword id="KW-0813">Transport</keyword>
<sequence>MDFLNMSYQLIVAYLIQLGIYIGALAVIFFNNIVYAAISLALVLSLIALLYLFFDADFLAVTQILIYVGAINVLILFAIMLISLPKSSTFIFYFTKKSQISAFACISLFVLLVKIILQTPWSTQSSYILLNENNKLDQIGIYLLSNFLLPFELISLLLLIALIGAVSIARYQNTEETE</sequence>